<reference key="1">
    <citation type="submission" date="2007-09" db="EMBL/GenBank/DDBJ databases">
        <title>Complete sequence of chromosome of Serratia proteamaculans 568.</title>
        <authorList>
            <consortium name="US DOE Joint Genome Institute"/>
            <person name="Copeland A."/>
            <person name="Lucas S."/>
            <person name="Lapidus A."/>
            <person name="Barry K."/>
            <person name="Glavina del Rio T."/>
            <person name="Dalin E."/>
            <person name="Tice H."/>
            <person name="Pitluck S."/>
            <person name="Chain P."/>
            <person name="Malfatti S."/>
            <person name="Shin M."/>
            <person name="Vergez L."/>
            <person name="Schmutz J."/>
            <person name="Larimer F."/>
            <person name="Land M."/>
            <person name="Hauser L."/>
            <person name="Kyrpides N."/>
            <person name="Kim E."/>
            <person name="Taghavi S."/>
            <person name="Newman L."/>
            <person name="Vangronsveld J."/>
            <person name="van der Lelie D."/>
            <person name="Richardson P."/>
        </authorList>
    </citation>
    <scope>NUCLEOTIDE SEQUENCE [LARGE SCALE GENOMIC DNA]</scope>
    <source>
        <strain>568</strain>
    </source>
</reference>
<dbReference type="EC" id="5.4.2.10" evidence="1"/>
<dbReference type="EMBL" id="CP000826">
    <property type="protein sequence ID" value="ABV39593.1"/>
    <property type="molecule type" value="Genomic_DNA"/>
</dbReference>
<dbReference type="SMR" id="A8G903"/>
<dbReference type="STRING" id="399741.Spro_0485"/>
<dbReference type="KEGG" id="spe:Spro_0485"/>
<dbReference type="eggNOG" id="COG1109">
    <property type="taxonomic scope" value="Bacteria"/>
</dbReference>
<dbReference type="HOGENOM" id="CLU_016950_7_0_6"/>
<dbReference type="OrthoDB" id="9803322at2"/>
<dbReference type="GO" id="GO:0005829">
    <property type="term" value="C:cytosol"/>
    <property type="evidence" value="ECO:0007669"/>
    <property type="project" value="TreeGrafter"/>
</dbReference>
<dbReference type="GO" id="GO:0000287">
    <property type="term" value="F:magnesium ion binding"/>
    <property type="evidence" value="ECO:0007669"/>
    <property type="project" value="UniProtKB-UniRule"/>
</dbReference>
<dbReference type="GO" id="GO:0008966">
    <property type="term" value="F:phosphoglucosamine mutase activity"/>
    <property type="evidence" value="ECO:0007669"/>
    <property type="project" value="UniProtKB-UniRule"/>
</dbReference>
<dbReference type="GO" id="GO:0004615">
    <property type="term" value="F:phosphomannomutase activity"/>
    <property type="evidence" value="ECO:0007669"/>
    <property type="project" value="TreeGrafter"/>
</dbReference>
<dbReference type="GO" id="GO:0005975">
    <property type="term" value="P:carbohydrate metabolic process"/>
    <property type="evidence" value="ECO:0007669"/>
    <property type="project" value="InterPro"/>
</dbReference>
<dbReference type="GO" id="GO:0009252">
    <property type="term" value="P:peptidoglycan biosynthetic process"/>
    <property type="evidence" value="ECO:0007669"/>
    <property type="project" value="TreeGrafter"/>
</dbReference>
<dbReference type="GO" id="GO:0006048">
    <property type="term" value="P:UDP-N-acetylglucosamine biosynthetic process"/>
    <property type="evidence" value="ECO:0007669"/>
    <property type="project" value="TreeGrafter"/>
</dbReference>
<dbReference type="CDD" id="cd05802">
    <property type="entry name" value="GlmM"/>
    <property type="match status" value="1"/>
</dbReference>
<dbReference type="FunFam" id="3.30.310.50:FF:000001">
    <property type="entry name" value="Phosphoglucosamine mutase"/>
    <property type="match status" value="1"/>
</dbReference>
<dbReference type="FunFam" id="3.40.120.10:FF:000001">
    <property type="entry name" value="Phosphoglucosamine mutase"/>
    <property type="match status" value="1"/>
</dbReference>
<dbReference type="FunFam" id="3.40.120.10:FF:000002">
    <property type="entry name" value="Phosphoglucosamine mutase"/>
    <property type="match status" value="1"/>
</dbReference>
<dbReference type="Gene3D" id="3.40.120.10">
    <property type="entry name" value="Alpha-D-Glucose-1,6-Bisphosphate, subunit A, domain 3"/>
    <property type="match status" value="3"/>
</dbReference>
<dbReference type="Gene3D" id="3.30.310.50">
    <property type="entry name" value="Alpha-D-phosphohexomutase, C-terminal domain"/>
    <property type="match status" value="1"/>
</dbReference>
<dbReference type="HAMAP" id="MF_01554_B">
    <property type="entry name" value="GlmM_B"/>
    <property type="match status" value="1"/>
</dbReference>
<dbReference type="InterPro" id="IPR005844">
    <property type="entry name" value="A-D-PHexomutase_a/b/a-I"/>
</dbReference>
<dbReference type="InterPro" id="IPR016055">
    <property type="entry name" value="A-D-PHexomutase_a/b/a-I/II/III"/>
</dbReference>
<dbReference type="InterPro" id="IPR005845">
    <property type="entry name" value="A-D-PHexomutase_a/b/a-II"/>
</dbReference>
<dbReference type="InterPro" id="IPR005846">
    <property type="entry name" value="A-D-PHexomutase_a/b/a-III"/>
</dbReference>
<dbReference type="InterPro" id="IPR005843">
    <property type="entry name" value="A-D-PHexomutase_C"/>
</dbReference>
<dbReference type="InterPro" id="IPR036900">
    <property type="entry name" value="A-D-PHexomutase_C_sf"/>
</dbReference>
<dbReference type="InterPro" id="IPR016066">
    <property type="entry name" value="A-D-PHexomutase_CS"/>
</dbReference>
<dbReference type="InterPro" id="IPR005841">
    <property type="entry name" value="Alpha-D-phosphohexomutase_SF"/>
</dbReference>
<dbReference type="InterPro" id="IPR006352">
    <property type="entry name" value="GlmM_bact"/>
</dbReference>
<dbReference type="InterPro" id="IPR050060">
    <property type="entry name" value="Phosphoglucosamine_mutase"/>
</dbReference>
<dbReference type="NCBIfam" id="TIGR01455">
    <property type="entry name" value="glmM"/>
    <property type="match status" value="1"/>
</dbReference>
<dbReference type="NCBIfam" id="NF008139">
    <property type="entry name" value="PRK10887.1"/>
    <property type="match status" value="1"/>
</dbReference>
<dbReference type="PANTHER" id="PTHR42946:SF1">
    <property type="entry name" value="PHOSPHOGLUCOMUTASE (ALPHA-D-GLUCOSE-1,6-BISPHOSPHATE-DEPENDENT)"/>
    <property type="match status" value="1"/>
</dbReference>
<dbReference type="PANTHER" id="PTHR42946">
    <property type="entry name" value="PHOSPHOHEXOSE MUTASE"/>
    <property type="match status" value="1"/>
</dbReference>
<dbReference type="Pfam" id="PF02878">
    <property type="entry name" value="PGM_PMM_I"/>
    <property type="match status" value="1"/>
</dbReference>
<dbReference type="Pfam" id="PF02879">
    <property type="entry name" value="PGM_PMM_II"/>
    <property type="match status" value="1"/>
</dbReference>
<dbReference type="Pfam" id="PF02880">
    <property type="entry name" value="PGM_PMM_III"/>
    <property type="match status" value="1"/>
</dbReference>
<dbReference type="Pfam" id="PF00408">
    <property type="entry name" value="PGM_PMM_IV"/>
    <property type="match status" value="1"/>
</dbReference>
<dbReference type="PRINTS" id="PR00509">
    <property type="entry name" value="PGMPMM"/>
</dbReference>
<dbReference type="SUPFAM" id="SSF55957">
    <property type="entry name" value="Phosphoglucomutase, C-terminal domain"/>
    <property type="match status" value="1"/>
</dbReference>
<dbReference type="SUPFAM" id="SSF53738">
    <property type="entry name" value="Phosphoglucomutase, first 3 domains"/>
    <property type="match status" value="3"/>
</dbReference>
<dbReference type="PROSITE" id="PS00710">
    <property type="entry name" value="PGM_PMM"/>
    <property type="match status" value="1"/>
</dbReference>
<accession>A8G903</accession>
<feature type="chain" id="PRO_1000068914" description="Phosphoglucosamine mutase">
    <location>
        <begin position="1"/>
        <end position="445"/>
    </location>
</feature>
<feature type="active site" description="Phosphoserine intermediate" evidence="1">
    <location>
        <position position="102"/>
    </location>
</feature>
<feature type="binding site" description="via phosphate group" evidence="1">
    <location>
        <position position="102"/>
    </location>
    <ligand>
        <name>Mg(2+)</name>
        <dbReference type="ChEBI" id="CHEBI:18420"/>
    </ligand>
</feature>
<feature type="binding site" evidence="1">
    <location>
        <position position="241"/>
    </location>
    <ligand>
        <name>Mg(2+)</name>
        <dbReference type="ChEBI" id="CHEBI:18420"/>
    </ligand>
</feature>
<feature type="binding site" evidence="1">
    <location>
        <position position="243"/>
    </location>
    <ligand>
        <name>Mg(2+)</name>
        <dbReference type="ChEBI" id="CHEBI:18420"/>
    </ligand>
</feature>
<feature type="binding site" evidence="1">
    <location>
        <position position="245"/>
    </location>
    <ligand>
        <name>Mg(2+)</name>
        <dbReference type="ChEBI" id="CHEBI:18420"/>
    </ligand>
</feature>
<feature type="modified residue" description="Phosphoserine" evidence="1">
    <location>
        <position position="102"/>
    </location>
</feature>
<organism>
    <name type="scientific">Serratia proteamaculans (strain 568)</name>
    <dbReference type="NCBI Taxonomy" id="399741"/>
    <lineage>
        <taxon>Bacteria</taxon>
        <taxon>Pseudomonadati</taxon>
        <taxon>Pseudomonadota</taxon>
        <taxon>Gammaproteobacteria</taxon>
        <taxon>Enterobacterales</taxon>
        <taxon>Yersiniaceae</taxon>
        <taxon>Serratia</taxon>
    </lineage>
</organism>
<proteinExistence type="inferred from homology"/>
<name>GLMM_SERP5</name>
<keyword id="KW-0413">Isomerase</keyword>
<keyword id="KW-0460">Magnesium</keyword>
<keyword id="KW-0479">Metal-binding</keyword>
<keyword id="KW-0597">Phosphoprotein</keyword>
<protein>
    <recommendedName>
        <fullName evidence="1">Phosphoglucosamine mutase</fullName>
        <ecNumber evidence="1">5.4.2.10</ecNumber>
    </recommendedName>
</protein>
<comment type="function">
    <text evidence="1">Catalyzes the conversion of glucosamine-6-phosphate to glucosamine-1-phosphate.</text>
</comment>
<comment type="catalytic activity">
    <reaction evidence="1">
        <text>alpha-D-glucosamine 1-phosphate = D-glucosamine 6-phosphate</text>
        <dbReference type="Rhea" id="RHEA:23424"/>
        <dbReference type="ChEBI" id="CHEBI:58516"/>
        <dbReference type="ChEBI" id="CHEBI:58725"/>
        <dbReference type="EC" id="5.4.2.10"/>
    </reaction>
</comment>
<comment type="cofactor">
    <cofactor evidence="1">
        <name>Mg(2+)</name>
        <dbReference type="ChEBI" id="CHEBI:18420"/>
    </cofactor>
    <text evidence="1">Binds 1 Mg(2+) ion per subunit.</text>
</comment>
<comment type="PTM">
    <text evidence="1">Activated by phosphorylation.</text>
</comment>
<comment type="similarity">
    <text evidence="1">Belongs to the phosphohexose mutase family.</text>
</comment>
<gene>
    <name evidence="1" type="primary">glmM</name>
    <name type="ordered locus">Spro_0485</name>
</gene>
<evidence type="ECO:0000255" key="1">
    <source>
        <dbReference type="HAMAP-Rule" id="MF_01554"/>
    </source>
</evidence>
<sequence length="445" mass="47841">MSERKYFGTDGIRGKVGDTPITPEFVLKLGWAAGKVLARHGSRKIIIGKDTRISGYMLESALEAGLAAAGLSASFTGPMPTPAVAYLTRTFRAEAGIVISASHNPFYDNGIKFFSIDGAKLPDDVEEAIEAEMEKPLTCVESSELGKASRIIDAAGRYIEFCKGTFPSELSLKGLKIVVDCANGATYHIAPSVLRELGATVIAIGVEPDGMNINEKCGATDVRQLQERVLQEKAHVGLAFDGDGDRVMMVDHLGNKVDGDQILYIIAREGLRQGQLRGGAVGTLMSNMGLELALKQLGIPFARAKVGDRYVLEKLQELGWRIGAENSGHVILLDKTTTGDGIVAGLQVLTAIVRNSMSLHDLCSGMKLLPQILVNVRFAGEHNPLESEEVRKITEQVEVELAGRGRVLLRKSGTEPLIRVMVEGEDEQQVTALAHRIADAVKSAG</sequence>